<sequence>MNAYQKTIGRAVTLSGVGVHGGAPASARLLPADADTGILFQRSDIKDSAPVCAHVSQIGATDLCTSLGAREARIDTVEHLMAAISALGIDNLVVEIEGPEVPILDGTSARFIEAVDSVGVVTQDAKRRFIRILKTVRVEAGNSWGEFRPYDGTRFEVEIDFECPLIGRQKFAHDVDEETFRKELSTARTFGFMKDVERLWAAGLALGASLDNSLVIGDDNSIVNADGLRFKDEFVRHKTLDAVGDLALAGLPFIGCFSSYRGGHRLNSEAVKALLSDETAFEIIEA</sequence>
<comment type="function">
    <text evidence="1">Catalyzes the hydrolysis of UDP-3-O-myristoyl-N-acetylglucosamine to form UDP-3-O-myristoylglucosamine and acetate, the committed step in lipid A biosynthesis.</text>
</comment>
<comment type="catalytic activity">
    <reaction evidence="1">
        <text>a UDP-3-O-[(3R)-3-hydroxyacyl]-N-acetyl-alpha-D-glucosamine + H2O = a UDP-3-O-[(3R)-3-hydroxyacyl]-alpha-D-glucosamine + acetate</text>
        <dbReference type="Rhea" id="RHEA:67816"/>
        <dbReference type="ChEBI" id="CHEBI:15377"/>
        <dbReference type="ChEBI" id="CHEBI:30089"/>
        <dbReference type="ChEBI" id="CHEBI:137740"/>
        <dbReference type="ChEBI" id="CHEBI:173225"/>
        <dbReference type="EC" id="3.5.1.108"/>
    </reaction>
</comment>
<comment type="cofactor">
    <cofactor evidence="1">
        <name>Zn(2+)</name>
        <dbReference type="ChEBI" id="CHEBI:29105"/>
    </cofactor>
</comment>
<comment type="pathway">
    <text evidence="1">Glycolipid biosynthesis; lipid IV(A) biosynthesis; lipid IV(A) from (3R)-3-hydroxytetradecanoyl-[acyl-carrier-protein] and UDP-N-acetyl-alpha-D-glucosamine: step 2/6.</text>
</comment>
<comment type="similarity">
    <text evidence="1">Belongs to the LpxC family.</text>
</comment>
<reference key="1">
    <citation type="journal article" date="2005" name="J. Bacteriol.">
        <title>Completion of the genome sequence of Brucella abortus and comparison to the highly similar genomes of Brucella melitensis and Brucella suis.</title>
        <authorList>
            <person name="Halling S.M."/>
            <person name="Peterson-Burch B.D."/>
            <person name="Bricker B.J."/>
            <person name="Zuerner R.L."/>
            <person name="Qing Z."/>
            <person name="Li L.-L."/>
            <person name="Kapur V."/>
            <person name="Alt D.P."/>
            <person name="Olsen S.C."/>
        </authorList>
    </citation>
    <scope>NUCLEOTIDE SEQUENCE [LARGE SCALE GENOMIC DNA]</scope>
    <source>
        <strain>9-941</strain>
    </source>
</reference>
<dbReference type="EC" id="3.5.1.108" evidence="1"/>
<dbReference type="EMBL" id="AE017223">
    <property type="protein sequence ID" value="AAX74749.1"/>
    <property type="molecule type" value="Genomic_DNA"/>
</dbReference>
<dbReference type="RefSeq" id="WP_002964532.1">
    <property type="nucleotide sequence ID" value="NC_006932.1"/>
</dbReference>
<dbReference type="SMR" id="Q57C85"/>
<dbReference type="EnsemblBacteria" id="AAX74749">
    <property type="protein sequence ID" value="AAX74749"/>
    <property type="gene ID" value="BruAb1_1419"/>
</dbReference>
<dbReference type="GeneID" id="97533370"/>
<dbReference type="KEGG" id="bmb:BruAb1_1419"/>
<dbReference type="HOGENOM" id="CLU_046528_1_1_5"/>
<dbReference type="UniPathway" id="UPA00359">
    <property type="reaction ID" value="UER00478"/>
</dbReference>
<dbReference type="Proteomes" id="UP000000540">
    <property type="component" value="Chromosome I"/>
</dbReference>
<dbReference type="GO" id="GO:0016020">
    <property type="term" value="C:membrane"/>
    <property type="evidence" value="ECO:0007669"/>
    <property type="project" value="GOC"/>
</dbReference>
<dbReference type="GO" id="GO:0046872">
    <property type="term" value="F:metal ion binding"/>
    <property type="evidence" value="ECO:0007669"/>
    <property type="project" value="UniProtKB-KW"/>
</dbReference>
<dbReference type="GO" id="GO:0103117">
    <property type="term" value="F:UDP-3-O-acyl-N-acetylglucosamine deacetylase activity"/>
    <property type="evidence" value="ECO:0007669"/>
    <property type="project" value="UniProtKB-UniRule"/>
</dbReference>
<dbReference type="GO" id="GO:0009245">
    <property type="term" value="P:lipid A biosynthetic process"/>
    <property type="evidence" value="ECO:0007669"/>
    <property type="project" value="UniProtKB-UniRule"/>
</dbReference>
<dbReference type="Gene3D" id="3.30.230.20">
    <property type="entry name" value="lpxc deacetylase, domain 1"/>
    <property type="match status" value="1"/>
</dbReference>
<dbReference type="Gene3D" id="3.30.1700.10">
    <property type="entry name" value="lpxc deacetylase, domain 2"/>
    <property type="match status" value="1"/>
</dbReference>
<dbReference type="HAMAP" id="MF_00388">
    <property type="entry name" value="LpxC"/>
    <property type="match status" value="1"/>
</dbReference>
<dbReference type="InterPro" id="IPR020568">
    <property type="entry name" value="Ribosomal_Su5_D2-typ_SF"/>
</dbReference>
<dbReference type="InterPro" id="IPR004463">
    <property type="entry name" value="UDP-acyl_GlcNac_deAcase"/>
</dbReference>
<dbReference type="InterPro" id="IPR011334">
    <property type="entry name" value="UDP-acyl_GlcNac_deAcase_C"/>
</dbReference>
<dbReference type="InterPro" id="IPR015870">
    <property type="entry name" value="UDP-acyl_N-AcGlcN_deAcase_N"/>
</dbReference>
<dbReference type="NCBIfam" id="TIGR00325">
    <property type="entry name" value="lpxC"/>
    <property type="match status" value="1"/>
</dbReference>
<dbReference type="PANTHER" id="PTHR33694">
    <property type="entry name" value="UDP-3-O-ACYL-N-ACETYLGLUCOSAMINE DEACETYLASE 1, MITOCHONDRIAL-RELATED"/>
    <property type="match status" value="1"/>
</dbReference>
<dbReference type="PANTHER" id="PTHR33694:SF1">
    <property type="entry name" value="UDP-3-O-ACYL-N-ACETYLGLUCOSAMINE DEACETYLASE 1, MITOCHONDRIAL-RELATED"/>
    <property type="match status" value="1"/>
</dbReference>
<dbReference type="Pfam" id="PF03331">
    <property type="entry name" value="LpxC"/>
    <property type="match status" value="1"/>
</dbReference>
<dbReference type="SUPFAM" id="SSF54211">
    <property type="entry name" value="Ribosomal protein S5 domain 2-like"/>
    <property type="match status" value="2"/>
</dbReference>
<organism>
    <name type="scientific">Brucella abortus biovar 1 (strain 9-941)</name>
    <dbReference type="NCBI Taxonomy" id="262698"/>
    <lineage>
        <taxon>Bacteria</taxon>
        <taxon>Pseudomonadati</taxon>
        <taxon>Pseudomonadota</taxon>
        <taxon>Alphaproteobacteria</taxon>
        <taxon>Hyphomicrobiales</taxon>
        <taxon>Brucellaceae</taxon>
        <taxon>Brucella/Ochrobactrum group</taxon>
        <taxon>Brucella</taxon>
    </lineage>
</organism>
<keyword id="KW-0378">Hydrolase</keyword>
<keyword id="KW-0441">Lipid A biosynthesis</keyword>
<keyword id="KW-0444">Lipid biosynthesis</keyword>
<keyword id="KW-0443">Lipid metabolism</keyword>
<keyword id="KW-0479">Metal-binding</keyword>
<keyword id="KW-0862">Zinc</keyword>
<evidence type="ECO:0000255" key="1">
    <source>
        <dbReference type="HAMAP-Rule" id="MF_00388"/>
    </source>
</evidence>
<protein>
    <recommendedName>
        <fullName evidence="1">UDP-3-O-acyl-N-acetylglucosamine deacetylase</fullName>
        <shortName evidence="1">UDP-3-O-acyl-GlcNAc deacetylase</shortName>
        <ecNumber evidence="1">3.5.1.108</ecNumber>
    </recommendedName>
    <alternativeName>
        <fullName evidence="1">UDP-3-O-[R-3-hydroxymyristoyl]-N-acetylglucosamine deacetylase</fullName>
    </alternativeName>
</protein>
<feature type="chain" id="PRO_0000191918" description="UDP-3-O-acyl-N-acetylglucosamine deacetylase">
    <location>
        <begin position="1"/>
        <end position="286"/>
    </location>
</feature>
<feature type="active site" description="Proton donor" evidence="1">
    <location>
        <position position="264"/>
    </location>
</feature>
<feature type="binding site" evidence="1">
    <location>
        <position position="79"/>
    </location>
    <ligand>
        <name>Zn(2+)</name>
        <dbReference type="ChEBI" id="CHEBI:29105"/>
    </ligand>
</feature>
<feature type="binding site" evidence="1">
    <location>
        <position position="237"/>
    </location>
    <ligand>
        <name>Zn(2+)</name>
        <dbReference type="ChEBI" id="CHEBI:29105"/>
    </ligand>
</feature>
<feature type="binding site" evidence="1">
    <location>
        <position position="241"/>
    </location>
    <ligand>
        <name>Zn(2+)</name>
        <dbReference type="ChEBI" id="CHEBI:29105"/>
    </ligand>
</feature>
<gene>
    <name evidence="1" type="primary">lpxC</name>
    <name type="ordered locus">BruAb1_1419</name>
</gene>
<accession>Q57C85</accession>
<name>LPXC_BRUAB</name>
<proteinExistence type="inferred from homology"/>